<sequence length="1252" mass="140058">MFKCPERVSVKKKEDILDLPNLVEVQIKSYKQFLQIGKLAEERENIGLEEVFREIFPIKSYNEATILEYLSYNLGVPKYSPEECIRRGITYSVTLKVRFRLTDETGIKEEEVYMGTIPIMTDKGTFIINGAERVVVSQVHRSPGINFEQEKHSKGNVLFSFRIIPYRGSWLEAVFDINDLIYIHIDRKKRRRKILAMTFIRALGYSTDADIIEEFFSVEERSLRSEKDFVALVGKVLADNVVDADSSLVYGKAGEKLSTAMLKRILDTGVQSLKIAVGADENHPIIKMLAKDPTDSYEAALKDFYRRLRPGEPATLANARSTIMRLFFDAKRYNLGRVGRYKLNKKLGFPLDDETLSQVTLRKEDVIGALKYLIRLRMGDEKTSIDDIDHLANRRVRSVGELIQNHCRSGLARMEKIVRERMNLFDFSSDTLTPGKIISAKGLVSVLKDFFSRSQLSQFMDQTNPVAELTHKRRLSALGPGGLNRERAGFEVRDVHASHYGRICPIETPEGPNIGLITSLSSFAKINEFGFIETPYRVVRDGIVTDEIEYMTADVEEECVIAQASAELDEYNMFKTPVCWARYKGEAFEADTSTVTHMDVSPKQLVSVVTGLIPFLEHDDANRALMGSNMQRQAVPLLKTEAAIVGTGLEGRAAKDSGAIIVAQEDGVVEYVDSYEIVVAKKNNPTLKDRYQLKKFLRSNSGTCINQTPLCSVGDVVTHGDVLADGPATDKGELALGKNVLVAFMPWYGYNFEDAIIISERLIKQDAYTSIYIEEFELTARDTKLGKEEITRDIPNVSEEVLANLGEDGIVRIGAEVKPGDILVGKITPKSETELAPEERLLRAIFGEKAADVKDASLTVPPGTEGVVMDVKVFSRKDRLSKSDDELVEEAVHLKDLQKEYKSQLAQLKVEHREKLGALLLNEKAPAAIVHRRSADILVQEGAIFDQETIELLERESLVDLLIAPCDMYDVLKDILSSYETAVQRLEVNYKTEAEHIKEGDADLDHGVIRQVKVYVASKRKLQVGDKMAGRHGNKGVVSKIVPEADMPFLANGETVQMILNPLGVPSRMNLGQVLETHLGYAAKTAGIYVKTPVFEGFPESRIWDMMIEQGLPEDGKSYLFDGKTGERFDSKVVVGYIYMLKLSHLIADKIHARSIGPYSLVTQQPLGGKAQMGGQRFGEMEVWALEAYGVAHMLQEILTVKSDDVSGRTRIYESIVKGENLLRSGTPESFNVLIKEMQGLGLDVRPMVVDA</sequence>
<proteinExistence type="inferred from homology"/>
<feature type="chain" id="PRO_1000141675" description="DNA-directed RNA polymerase subunit beta">
    <location>
        <begin position="1"/>
        <end position="1252"/>
    </location>
</feature>
<name>RPOB_CHLT2</name>
<dbReference type="EC" id="2.7.7.6" evidence="1"/>
<dbReference type="EMBL" id="AM884176">
    <property type="protein sequence ID" value="CAP04007.1"/>
    <property type="molecule type" value="Genomic_DNA"/>
</dbReference>
<dbReference type="EMBL" id="AF087339">
    <property type="protein sequence ID" value="AAD04113.1"/>
    <property type="molecule type" value="Genomic_DNA"/>
</dbReference>
<dbReference type="RefSeq" id="WP_012263639.1">
    <property type="nucleotide sequence ID" value="NC_010287.1"/>
</dbReference>
<dbReference type="RefSeq" id="YP_001654643.1">
    <property type="nucleotide sequence ID" value="NC_010287.1"/>
</dbReference>
<dbReference type="SMR" id="B0B7N1"/>
<dbReference type="KEGG" id="ctb:CTL0567"/>
<dbReference type="PATRIC" id="fig|471472.4.peg.608"/>
<dbReference type="HOGENOM" id="CLU_000524_4_1_0"/>
<dbReference type="Proteomes" id="UP001154402">
    <property type="component" value="Chromosome"/>
</dbReference>
<dbReference type="GO" id="GO:0000428">
    <property type="term" value="C:DNA-directed RNA polymerase complex"/>
    <property type="evidence" value="ECO:0007669"/>
    <property type="project" value="UniProtKB-KW"/>
</dbReference>
<dbReference type="GO" id="GO:0003677">
    <property type="term" value="F:DNA binding"/>
    <property type="evidence" value="ECO:0007669"/>
    <property type="project" value="UniProtKB-UniRule"/>
</dbReference>
<dbReference type="GO" id="GO:0003899">
    <property type="term" value="F:DNA-directed RNA polymerase activity"/>
    <property type="evidence" value="ECO:0007669"/>
    <property type="project" value="UniProtKB-UniRule"/>
</dbReference>
<dbReference type="GO" id="GO:0032549">
    <property type="term" value="F:ribonucleoside binding"/>
    <property type="evidence" value="ECO:0007669"/>
    <property type="project" value="InterPro"/>
</dbReference>
<dbReference type="GO" id="GO:0006351">
    <property type="term" value="P:DNA-templated transcription"/>
    <property type="evidence" value="ECO:0007669"/>
    <property type="project" value="UniProtKB-UniRule"/>
</dbReference>
<dbReference type="CDD" id="cd00653">
    <property type="entry name" value="RNA_pol_B_RPB2"/>
    <property type="match status" value="1"/>
</dbReference>
<dbReference type="FunFam" id="3.90.1800.10:FF:000001">
    <property type="entry name" value="DNA-directed RNA polymerase subunit beta"/>
    <property type="match status" value="1"/>
</dbReference>
<dbReference type="Gene3D" id="2.40.50.100">
    <property type="match status" value="1"/>
</dbReference>
<dbReference type="Gene3D" id="2.40.50.150">
    <property type="match status" value="1"/>
</dbReference>
<dbReference type="Gene3D" id="3.90.1100.10">
    <property type="match status" value="1"/>
</dbReference>
<dbReference type="Gene3D" id="2.40.270.10">
    <property type="entry name" value="DNA-directed RNA polymerase, subunit 2, domain 6"/>
    <property type="match status" value="3"/>
</dbReference>
<dbReference type="Gene3D" id="3.90.1800.10">
    <property type="entry name" value="RNA polymerase alpha subunit dimerisation domain"/>
    <property type="match status" value="1"/>
</dbReference>
<dbReference type="Gene3D" id="3.90.1110.10">
    <property type="entry name" value="RNA polymerase Rpb2, domain 2"/>
    <property type="match status" value="1"/>
</dbReference>
<dbReference type="HAMAP" id="MF_01321">
    <property type="entry name" value="RNApol_bact_RpoB"/>
    <property type="match status" value="1"/>
</dbReference>
<dbReference type="InterPro" id="IPR019462">
    <property type="entry name" value="DNA-dir_RNA_pol_bsu_external_1"/>
</dbReference>
<dbReference type="InterPro" id="IPR015712">
    <property type="entry name" value="DNA-dir_RNA_pol_su2"/>
</dbReference>
<dbReference type="InterPro" id="IPR007120">
    <property type="entry name" value="DNA-dir_RNAP_su2_dom"/>
</dbReference>
<dbReference type="InterPro" id="IPR037033">
    <property type="entry name" value="DNA-dir_RNAP_su2_hyb_sf"/>
</dbReference>
<dbReference type="InterPro" id="IPR010243">
    <property type="entry name" value="RNA_pol_bsu_bac"/>
</dbReference>
<dbReference type="InterPro" id="IPR007121">
    <property type="entry name" value="RNA_pol_bsu_CS"/>
</dbReference>
<dbReference type="InterPro" id="IPR007644">
    <property type="entry name" value="RNA_pol_bsu_protrusion"/>
</dbReference>
<dbReference type="InterPro" id="IPR007642">
    <property type="entry name" value="RNA_pol_Rpb2_2"/>
</dbReference>
<dbReference type="InterPro" id="IPR037034">
    <property type="entry name" value="RNA_pol_Rpb2_2_sf"/>
</dbReference>
<dbReference type="InterPro" id="IPR007645">
    <property type="entry name" value="RNA_pol_Rpb2_3"/>
</dbReference>
<dbReference type="InterPro" id="IPR007641">
    <property type="entry name" value="RNA_pol_Rpb2_7"/>
</dbReference>
<dbReference type="InterPro" id="IPR014724">
    <property type="entry name" value="RNA_pol_RPB2_OB-fold"/>
</dbReference>
<dbReference type="NCBIfam" id="NF001616">
    <property type="entry name" value="PRK00405.1"/>
    <property type="match status" value="1"/>
</dbReference>
<dbReference type="NCBIfam" id="TIGR02013">
    <property type="entry name" value="rpoB"/>
    <property type="match status" value="1"/>
</dbReference>
<dbReference type="PANTHER" id="PTHR20856">
    <property type="entry name" value="DNA-DIRECTED RNA POLYMERASE I SUBUNIT 2"/>
    <property type="match status" value="1"/>
</dbReference>
<dbReference type="Pfam" id="PF04563">
    <property type="entry name" value="RNA_pol_Rpb2_1"/>
    <property type="match status" value="1"/>
</dbReference>
<dbReference type="Pfam" id="PF04561">
    <property type="entry name" value="RNA_pol_Rpb2_2"/>
    <property type="match status" value="1"/>
</dbReference>
<dbReference type="Pfam" id="PF04565">
    <property type="entry name" value="RNA_pol_Rpb2_3"/>
    <property type="match status" value="1"/>
</dbReference>
<dbReference type="Pfam" id="PF10385">
    <property type="entry name" value="RNA_pol_Rpb2_45"/>
    <property type="match status" value="1"/>
</dbReference>
<dbReference type="Pfam" id="PF00562">
    <property type="entry name" value="RNA_pol_Rpb2_6"/>
    <property type="match status" value="1"/>
</dbReference>
<dbReference type="Pfam" id="PF04560">
    <property type="entry name" value="RNA_pol_Rpb2_7"/>
    <property type="match status" value="1"/>
</dbReference>
<dbReference type="SUPFAM" id="SSF64484">
    <property type="entry name" value="beta and beta-prime subunits of DNA dependent RNA-polymerase"/>
    <property type="match status" value="1"/>
</dbReference>
<dbReference type="PROSITE" id="PS01166">
    <property type="entry name" value="RNA_POL_BETA"/>
    <property type="match status" value="1"/>
</dbReference>
<protein>
    <recommendedName>
        <fullName evidence="1">DNA-directed RNA polymerase subunit beta</fullName>
        <shortName evidence="1">RNAP subunit beta</shortName>
        <ecNumber evidence="1">2.7.7.6</ecNumber>
    </recommendedName>
    <alternativeName>
        <fullName evidence="1">RNA polymerase subunit beta</fullName>
    </alternativeName>
    <alternativeName>
        <fullName evidence="1">Transcriptase subunit beta</fullName>
    </alternativeName>
</protein>
<evidence type="ECO:0000255" key="1">
    <source>
        <dbReference type="HAMAP-Rule" id="MF_01321"/>
    </source>
</evidence>
<accession>B0B7N1</accession>
<accession>O84317</accession>
<reference key="1">
    <citation type="journal article" date="2008" name="Genome Res.">
        <title>Chlamydia trachomatis: genome sequence analysis of lymphogranuloma venereum isolates.</title>
        <authorList>
            <person name="Thomson N.R."/>
            <person name="Holden M.T.G."/>
            <person name="Carder C."/>
            <person name="Lennard N."/>
            <person name="Lockey S.J."/>
            <person name="Marsh P."/>
            <person name="Skipp P."/>
            <person name="O'Connor C.D."/>
            <person name="Goodhead I."/>
            <person name="Norbertzcak H."/>
            <person name="Harris B."/>
            <person name="Ormond D."/>
            <person name="Rance R."/>
            <person name="Quail M.A."/>
            <person name="Parkhill J."/>
            <person name="Stephens R.S."/>
            <person name="Clarke I.N."/>
        </authorList>
    </citation>
    <scope>NUCLEOTIDE SEQUENCE [LARGE SCALE GENOMIC DNA]</scope>
    <source>
        <strain>ATCC VR-902B / DSM 19102 / 434/Bu</strain>
    </source>
</reference>
<reference key="2">
    <citation type="submission" date="1998-08" db="EMBL/GenBank/DDBJ databases">
        <title>Gene identification of Chlamydia trachomatis by random DNA sequencing.</title>
        <authorList>
            <person name="Wang L."/>
            <person name="Steenburg S.D."/>
            <person name="Zheng Y."/>
            <person name="Larsen S.H."/>
        </authorList>
    </citation>
    <scope>NUCLEOTIDE SEQUENCE [GENOMIC DNA] OF 472-528</scope>
</reference>
<gene>
    <name evidence="1" type="primary">rpoB</name>
    <name type="ordered locus">CTL0567</name>
</gene>
<keyword id="KW-0240">DNA-directed RNA polymerase</keyword>
<keyword id="KW-0548">Nucleotidyltransferase</keyword>
<keyword id="KW-0804">Transcription</keyword>
<keyword id="KW-0808">Transferase</keyword>
<organism>
    <name type="scientific">Chlamydia trachomatis serovar L2 (strain ATCC VR-902B / DSM 19102 / 434/Bu)</name>
    <dbReference type="NCBI Taxonomy" id="471472"/>
    <lineage>
        <taxon>Bacteria</taxon>
        <taxon>Pseudomonadati</taxon>
        <taxon>Chlamydiota</taxon>
        <taxon>Chlamydiia</taxon>
        <taxon>Chlamydiales</taxon>
        <taxon>Chlamydiaceae</taxon>
        <taxon>Chlamydia/Chlamydophila group</taxon>
        <taxon>Chlamydia</taxon>
    </lineage>
</organism>
<comment type="function">
    <text evidence="1">DNA-dependent RNA polymerase catalyzes the transcription of DNA into RNA using the four ribonucleoside triphosphates as substrates.</text>
</comment>
<comment type="catalytic activity">
    <reaction evidence="1">
        <text>RNA(n) + a ribonucleoside 5'-triphosphate = RNA(n+1) + diphosphate</text>
        <dbReference type="Rhea" id="RHEA:21248"/>
        <dbReference type="Rhea" id="RHEA-COMP:14527"/>
        <dbReference type="Rhea" id="RHEA-COMP:17342"/>
        <dbReference type="ChEBI" id="CHEBI:33019"/>
        <dbReference type="ChEBI" id="CHEBI:61557"/>
        <dbReference type="ChEBI" id="CHEBI:140395"/>
        <dbReference type="EC" id="2.7.7.6"/>
    </reaction>
</comment>
<comment type="subunit">
    <text evidence="1">The RNAP catalytic core consists of 2 alpha, 1 beta, 1 beta' and 1 omega subunit. When a sigma factor is associated with the core the holoenzyme is formed, which can initiate transcription.</text>
</comment>
<comment type="similarity">
    <text evidence="1">Belongs to the RNA polymerase beta chain family.</text>
</comment>